<gene>
    <name evidence="6" type="primary">krt18</name>
</gene>
<keyword id="KW-0175">Coiled coil</keyword>
<keyword id="KW-0403">Intermediate filament</keyword>
<keyword id="KW-0416">Keratin</keyword>
<keyword id="KW-0597">Phosphoprotein</keyword>
<reference evidence="6" key="1">
    <citation type="submission" date="2002-07" db="EMBL/GenBank/DDBJ databases">
        <title>Intermediate filament proteins of the siberian sturgeon Acipenser baeri.</title>
        <authorList>
            <person name="Haberkamp M."/>
            <person name="Schaffeld M."/>
            <person name="Markl J."/>
        </authorList>
    </citation>
    <scope>NUCLEOTIDE SEQUENCE [MRNA]</scope>
</reference>
<evidence type="ECO:0000250" key="1"/>
<evidence type="ECO:0000250" key="2">
    <source>
        <dbReference type="UniProtKB" id="P05783"/>
    </source>
</evidence>
<evidence type="ECO:0000255" key="3"/>
<evidence type="ECO:0000255" key="4">
    <source>
        <dbReference type="PROSITE-ProRule" id="PRU01188"/>
    </source>
</evidence>
<evidence type="ECO:0000305" key="5"/>
<evidence type="ECO:0000312" key="6">
    <source>
        <dbReference type="EMBL" id="CAD38124.1"/>
    </source>
</evidence>
<name>K1C18_ACIBE</name>
<proteinExistence type="evidence at transcript level"/>
<sequence length="435" mass="48486">MSYRPGSYSVSSMRPVGSVRSSQVMTVQRSMPLASAASVYGGAGGRGSRISVGGSSSGFGSGLGSGAGGSYSSMSVSGSGLVGNEKETMIGLNDRLAAYLETVRNLEQANSKLEFQIREALEKKGPTTRDLSPFEKTLEDLRKKVYDMTMDNSRLVLQIDNSRLAADDFRVKFESEYSIRQSVESDIIGLRKVIDDTNMGRMNLESEIESLKEELIFIKQNHNQEVNDLRNQIAQSGVQVDVDAPKGQDLAQVLAEVRAQYESMAQKNRDELKAWHENKLTEVEVEVIQNTEALQGARTEVTELRRQMQSLEIELESQRSMKASLEDSLRDTEMRNNMEMERYNNMILQLEAELGQLRGNIQMQASEYEALLNIKMKLEAEIATYRRLLDGEDFRLQDALVDQSSTKSIKKVTVTQTLVDGKVVSESTNTKEIGK</sequence>
<protein>
    <recommendedName>
        <fullName>Keratin, type I cytoskeletal 18</fullName>
    </recommendedName>
    <alternativeName>
        <fullName>Cytokeratin-18</fullName>
        <shortName>CK-18</shortName>
    </alternativeName>
    <alternativeName>
        <fullName>Keratin type Is</fullName>
    </alternativeName>
    <alternativeName>
        <fullName>Keratin-18</fullName>
        <shortName>K18</shortName>
    </alternativeName>
</protein>
<feature type="initiator methionine" description="Removed" evidence="2">
    <location>
        <position position="1"/>
    </location>
</feature>
<feature type="chain" id="PRO_0000289070" description="Keratin, type I cytoskeletal 18" evidence="2">
    <location>
        <begin position="2"/>
        <end position="435"/>
    </location>
</feature>
<feature type="domain" description="IF rod" evidence="4">
    <location>
        <begin position="85"/>
        <end position="396"/>
    </location>
</feature>
<feature type="region of interest" description="Head" evidence="3">
    <location>
        <begin position="2"/>
        <end position="84"/>
    </location>
</feature>
<feature type="region of interest" description="Coil 1A" evidence="3">
    <location>
        <begin position="85"/>
        <end position="120"/>
    </location>
</feature>
<feature type="region of interest" description="Linker 1" evidence="3">
    <location>
        <begin position="121"/>
        <end position="137"/>
    </location>
</feature>
<feature type="region of interest" description="Coil 1B" evidence="3">
    <location>
        <begin position="138"/>
        <end position="229"/>
    </location>
</feature>
<feature type="region of interest" description="Linker 12" evidence="3">
    <location>
        <begin position="230"/>
        <end position="253"/>
    </location>
</feature>
<feature type="region of interest" description="Coil 2" evidence="3">
    <location>
        <begin position="254"/>
        <end position="391"/>
    </location>
</feature>
<feature type="region of interest" description="Tail" evidence="3">
    <location>
        <begin position="392"/>
        <end position="435"/>
    </location>
</feature>
<feature type="site" description="Cleavage; by caspases" evidence="1">
    <location>
        <begin position="243"/>
        <end position="244"/>
    </location>
</feature>
<comment type="function">
    <text evidence="1">When phosphorylated, plays a role in filament reorganization.</text>
</comment>
<comment type="subunit">
    <text evidence="1">Heterotetramer of two type I and two type II keratins. Keratin-18 associates with keratin-8 (By similarity).</text>
</comment>
<comment type="PTM">
    <text evidence="1">Phosphorylated.</text>
</comment>
<comment type="PTM">
    <text evidence="1">Proteolytically cleaved by caspases during epithelial cell apoptosis.</text>
</comment>
<comment type="miscellaneous">
    <text evidence="5">There are two types of cytoskeletal and microfibrillar keratin: I (acidic; 40-55 kDa) and II (neutral to basic; 56-70 kDa).</text>
</comment>
<comment type="similarity">
    <text evidence="4">Belongs to the intermediate filament family.</text>
</comment>
<organism>
    <name type="scientific">Acipenser baerii</name>
    <name type="common">Siberian sturgeon</name>
    <dbReference type="NCBI Taxonomy" id="27689"/>
    <lineage>
        <taxon>Eukaryota</taxon>
        <taxon>Metazoa</taxon>
        <taxon>Chordata</taxon>
        <taxon>Craniata</taxon>
        <taxon>Vertebrata</taxon>
        <taxon>Euteleostomi</taxon>
        <taxon>Actinopterygii</taxon>
        <taxon>Chondrostei</taxon>
        <taxon>Acipenseriformes</taxon>
        <taxon>Acipenseridae</taxon>
        <taxon>Acipenser</taxon>
    </lineage>
</organism>
<accession>Q7SYF8</accession>
<dbReference type="EMBL" id="AJ493261">
    <property type="protein sequence ID" value="CAD38124.1"/>
    <property type="molecule type" value="mRNA"/>
</dbReference>
<dbReference type="SMR" id="Q7SYF8"/>
<dbReference type="GO" id="GO:0045095">
    <property type="term" value="C:keratin filament"/>
    <property type="evidence" value="ECO:0007669"/>
    <property type="project" value="TreeGrafter"/>
</dbReference>
<dbReference type="GO" id="GO:0005198">
    <property type="term" value="F:structural molecule activity"/>
    <property type="evidence" value="ECO:0007669"/>
    <property type="project" value="InterPro"/>
</dbReference>
<dbReference type="GO" id="GO:0045104">
    <property type="term" value="P:intermediate filament cytoskeleton organization"/>
    <property type="evidence" value="ECO:0007669"/>
    <property type="project" value="TreeGrafter"/>
</dbReference>
<dbReference type="FunFam" id="1.20.5.1160:FF:000002">
    <property type="entry name" value="Type I keratin 10"/>
    <property type="match status" value="1"/>
</dbReference>
<dbReference type="FunFam" id="1.20.5.170:FF:000002">
    <property type="entry name" value="Type I keratin KA11"/>
    <property type="match status" value="1"/>
</dbReference>
<dbReference type="FunFam" id="1.20.5.500:FF:000001">
    <property type="entry name" value="Type II keratin 23"/>
    <property type="match status" value="1"/>
</dbReference>
<dbReference type="Gene3D" id="1.20.5.170">
    <property type="match status" value="1"/>
</dbReference>
<dbReference type="Gene3D" id="1.20.5.500">
    <property type="entry name" value="Single helix bin"/>
    <property type="match status" value="1"/>
</dbReference>
<dbReference type="Gene3D" id="1.20.5.1160">
    <property type="entry name" value="Vasodilator-stimulated phosphoprotein"/>
    <property type="match status" value="1"/>
</dbReference>
<dbReference type="InterPro" id="IPR018039">
    <property type="entry name" value="IF_conserved"/>
</dbReference>
<dbReference type="InterPro" id="IPR039008">
    <property type="entry name" value="IF_rod_dom"/>
</dbReference>
<dbReference type="InterPro" id="IPR002957">
    <property type="entry name" value="Keratin_I"/>
</dbReference>
<dbReference type="PANTHER" id="PTHR23239">
    <property type="entry name" value="INTERMEDIATE FILAMENT"/>
    <property type="match status" value="1"/>
</dbReference>
<dbReference type="PANTHER" id="PTHR23239:SF349">
    <property type="entry name" value="KERATIN, TYPE I CYTOSKELETAL 18"/>
    <property type="match status" value="1"/>
</dbReference>
<dbReference type="Pfam" id="PF00038">
    <property type="entry name" value="Filament"/>
    <property type="match status" value="1"/>
</dbReference>
<dbReference type="PRINTS" id="PR01248">
    <property type="entry name" value="TYPE1KERATIN"/>
</dbReference>
<dbReference type="SMART" id="SM01391">
    <property type="entry name" value="Filament"/>
    <property type="match status" value="1"/>
</dbReference>
<dbReference type="SUPFAM" id="SSF64593">
    <property type="entry name" value="Intermediate filament protein, coiled coil region"/>
    <property type="match status" value="2"/>
</dbReference>
<dbReference type="PROSITE" id="PS00226">
    <property type="entry name" value="IF_ROD_1"/>
    <property type="match status" value="1"/>
</dbReference>
<dbReference type="PROSITE" id="PS51842">
    <property type="entry name" value="IF_ROD_2"/>
    <property type="match status" value="1"/>
</dbReference>